<proteinExistence type="inferred from homology"/>
<comment type="function">
    <text evidence="1">Pectinolytic enzymes consist of four classes of enzymes: pectin lyase, polygalacturonase, pectin methylesterase and rhamnogalacturonase. Among pectinolytic enzymes, pectin lyase is the most important in depolymerization of pectin, since it cleaves internal glycosidic bonds of highly methylated pectins (By similarity).</text>
</comment>
<comment type="catalytic activity">
    <reaction>
        <text>Eliminative cleavage of (1-&gt;4)-alpha-D-galacturonan methyl ester to give oligosaccharides with 4-deoxy-6-O-methyl-alpha-D-galact-4-enuronosyl groups at their non-reducing ends.</text>
        <dbReference type="EC" id="4.2.2.10"/>
    </reaction>
</comment>
<comment type="subcellular location">
    <subcellularLocation>
        <location evidence="1">Secreted</location>
    </subcellularLocation>
</comment>
<comment type="similarity">
    <text evidence="3">Belongs to the polysaccharide lyase 1 family.</text>
</comment>
<evidence type="ECO:0000250" key="1"/>
<evidence type="ECO:0000255" key="2"/>
<evidence type="ECO:0000305" key="3"/>
<accession>B8N6W5</accession>
<gene>
    <name type="primary">pelA</name>
    <name type="ORF">AFLA_017180</name>
</gene>
<feature type="signal peptide" evidence="2">
    <location>
        <begin position="1"/>
        <end position="20"/>
    </location>
</feature>
<feature type="chain" id="PRO_0000394339" description="Probable pectin lyase A">
    <location>
        <begin position="21"/>
        <end position="375"/>
    </location>
</feature>
<feature type="active site" evidence="2">
    <location>
        <position position="250"/>
    </location>
</feature>
<feature type="disulfide bond" evidence="1">
    <location>
        <begin position="83"/>
        <end position="100"/>
    </location>
</feature>
<feature type="disulfide bond" evidence="1">
    <location>
        <begin position="92"/>
        <end position="220"/>
    </location>
</feature>
<feature type="disulfide bond" evidence="1">
    <location>
        <begin position="317"/>
        <end position="325"/>
    </location>
</feature>
<reference key="1">
    <citation type="journal article" date="2015" name="Genome Announc.">
        <title>Genome sequence of Aspergillus flavus NRRL 3357, a strain that causes aflatoxin contamination of food and feed.</title>
        <authorList>
            <person name="Nierman W.C."/>
            <person name="Yu J."/>
            <person name="Fedorova-Abrams N.D."/>
            <person name="Losada L."/>
            <person name="Cleveland T.E."/>
            <person name="Bhatnagar D."/>
            <person name="Bennett J.W."/>
            <person name="Dean R."/>
            <person name="Payne G.A."/>
        </authorList>
    </citation>
    <scope>NUCLEOTIDE SEQUENCE [LARGE SCALE GENOMIC DNA]</scope>
    <source>
        <strain>ATCC 200026 / FGSC A1120 / IAM 13836 / NRRL 3357 / JCM 12722 / SRRC 167</strain>
    </source>
</reference>
<dbReference type="EC" id="4.2.2.10"/>
<dbReference type="EMBL" id="EQ963474">
    <property type="protein sequence ID" value="EED54466.1"/>
    <property type="molecule type" value="Genomic_DNA"/>
</dbReference>
<dbReference type="RefSeq" id="XP_002375738.1">
    <property type="nucleotide sequence ID" value="XM_002375697.1"/>
</dbReference>
<dbReference type="SMR" id="B8N6W5"/>
<dbReference type="STRING" id="332952.B8N6W5"/>
<dbReference type="EnsemblFungi" id="EED54466">
    <property type="protein sequence ID" value="EED54466"/>
    <property type="gene ID" value="AFLA_017180"/>
</dbReference>
<dbReference type="VEuPathDB" id="FungiDB:AFLA_002173"/>
<dbReference type="eggNOG" id="ENOG502QXM6">
    <property type="taxonomic scope" value="Eukaryota"/>
</dbReference>
<dbReference type="HOGENOM" id="CLU_021980_0_1_1"/>
<dbReference type="OMA" id="CQSTIDI"/>
<dbReference type="GO" id="GO:0005576">
    <property type="term" value="C:extracellular region"/>
    <property type="evidence" value="ECO:0007669"/>
    <property type="project" value="UniProtKB-SubCell"/>
</dbReference>
<dbReference type="GO" id="GO:0030570">
    <property type="term" value="F:pectate lyase activity"/>
    <property type="evidence" value="ECO:0007669"/>
    <property type="project" value="InterPro"/>
</dbReference>
<dbReference type="GO" id="GO:0047490">
    <property type="term" value="F:pectin lyase activity"/>
    <property type="evidence" value="ECO:0000250"/>
    <property type="project" value="UniProtKB"/>
</dbReference>
<dbReference type="GO" id="GO:0071555">
    <property type="term" value="P:cell wall organization"/>
    <property type="evidence" value="ECO:0007669"/>
    <property type="project" value="UniProtKB-KW"/>
</dbReference>
<dbReference type="GO" id="GO:0045490">
    <property type="term" value="P:pectin catabolic process"/>
    <property type="evidence" value="ECO:0000250"/>
    <property type="project" value="UniProtKB"/>
</dbReference>
<dbReference type="FunFam" id="2.160.20.10:FF:000003">
    <property type="entry name" value="Pectin lyase F"/>
    <property type="match status" value="1"/>
</dbReference>
<dbReference type="Gene3D" id="2.160.20.10">
    <property type="entry name" value="Single-stranded right-handed beta-helix, Pectin lyase-like"/>
    <property type="match status" value="1"/>
</dbReference>
<dbReference type="InterPro" id="IPR002022">
    <property type="entry name" value="Pec_lyase"/>
</dbReference>
<dbReference type="InterPro" id="IPR012334">
    <property type="entry name" value="Pectin_lyas_fold"/>
</dbReference>
<dbReference type="InterPro" id="IPR011050">
    <property type="entry name" value="Pectin_lyase_fold/virulence"/>
</dbReference>
<dbReference type="InterPro" id="IPR045032">
    <property type="entry name" value="PEL"/>
</dbReference>
<dbReference type="PANTHER" id="PTHR31683">
    <property type="entry name" value="PECTATE LYASE 18-RELATED"/>
    <property type="match status" value="1"/>
</dbReference>
<dbReference type="PANTHER" id="PTHR31683:SF16">
    <property type="entry name" value="PECTIN LYASE A-RELATED"/>
    <property type="match status" value="1"/>
</dbReference>
<dbReference type="Pfam" id="PF00544">
    <property type="entry name" value="Pectate_lyase_4"/>
    <property type="match status" value="1"/>
</dbReference>
<dbReference type="SMART" id="SM00656">
    <property type="entry name" value="Amb_all"/>
    <property type="match status" value="1"/>
</dbReference>
<dbReference type="SUPFAM" id="SSF51126">
    <property type="entry name" value="Pectin lyase-like"/>
    <property type="match status" value="1"/>
</dbReference>
<organism>
    <name type="scientific">Aspergillus flavus (strain ATCC 200026 / FGSC A1120 / IAM 13836 / NRRL 3357 / JCM 12722 / SRRC 167)</name>
    <dbReference type="NCBI Taxonomy" id="332952"/>
    <lineage>
        <taxon>Eukaryota</taxon>
        <taxon>Fungi</taxon>
        <taxon>Dikarya</taxon>
        <taxon>Ascomycota</taxon>
        <taxon>Pezizomycotina</taxon>
        <taxon>Eurotiomycetes</taxon>
        <taxon>Eurotiomycetidae</taxon>
        <taxon>Eurotiales</taxon>
        <taxon>Aspergillaceae</taxon>
        <taxon>Aspergillus</taxon>
        <taxon>Aspergillus subgen. Circumdati</taxon>
    </lineage>
</organism>
<sequence length="375" mass="39345">MKITSTIPAVLLGLAPLSAAVSVSGSAEGFASGVTGGGDAEAQIPSDIDELKEWLTDDTPRVIVLDKEYDFTESEGTTSGTVCASWGTGSGCQKIIQDDCGDSPSSQATWYTAGTTGIDVASDKTILGDGDKGVIKGKGLRFRDGVSNIIVQNIEISDLNPEYVWGGDALYFDGSDLIWIDHVTTARTGRQHYTFGYETNTRITLSNNFINGETTYSTGCDGYTYWTFEMVGEADQITLQNNYIYMTAGRSPALSGGTLLHAVNNVWEKNNGHALEGGDAGARGIFEGNAWIGVSTIVGDYAGRLFNAPDSSSAGDCESALGRACEVNAVSDSGDLTAYTDTSFFSDFSGLTIAPATSATDAQSSVPNNAGMGKL</sequence>
<name>PELA_ASPFN</name>
<protein>
    <recommendedName>
        <fullName>Probable pectin lyase A</fullName>
        <shortName>PLA</shortName>
        <ecNumber>4.2.2.10</ecNumber>
    </recommendedName>
</protein>
<keyword id="KW-0119">Carbohydrate metabolism</keyword>
<keyword id="KW-0961">Cell wall biogenesis/degradation</keyword>
<keyword id="KW-1015">Disulfide bond</keyword>
<keyword id="KW-0456">Lyase</keyword>
<keyword id="KW-0624">Polysaccharide degradation</keyword>
<keyword id="KW-0964">Secreted</keyword>
<keyword id="KW-0732">Signal</keyword>